<protein>
    <recommendedName>
        <fullName evidence="1">Adenylosuccinate synthetase</fullName>
        <shortName evidence="1">AMPSase</shortName>
        <shortName evidence="1">AdSS</shortName>
        <ecNumber evidence="1">6.3.4.4</ecNumber>
    </recommendedName>
    <alternativeName>
        <fullName evidence="1">IMP--aspartate ligase</fullName>
    </alternativeName>
</protein>
<keyword id="KW-0963">Cytoplasm</keyword>
<keyword id="KW-0342">GTP-binding</keyword>
<keyword id="KW-0436">Ligase</keyword>
<keyword id="KW-0460">Magnesium</keyword>
<keyword id="KW-0479">Metal-binding</keyword>
<keyword id="KW-0547">Nucleotide-binding</keyword>
<keyword id="KW-0658">Purine biosynthesis</keyword>
<organism>
    <name type="scientific">Salmonella paratyphi C (strain RKS4594)</name>
    <dbReference type="NCBI Taxonomy" id="476213"/>
    <lineage>
        <taxon>Bacteria</taxon>
        <taxon>Pseudomonadati</taxon>
        <taxon>Pseudomonadota</taxon>
        <taxon>Gammaproteobacteria</taxon>
        <taxon>Enterobacterales</taxon>
        <taxon>Enterobacteriaceae</taxon>
        <taxon>Salmonella</taxon>
    </lineage>
</organism>
<evidence type="ECO:0000255" key="1">
    <source>
        <dbReference type="HAMAP-Rule" id="MF_00011"/>
    </source>
</evidence>
<reference key="1">
    <citation type="journal article" date="2009" name="PLoS ONE">
        <title>Salmonella paratyphi C: genetic divergence from Salmonella choleraesuis and pathogenic convergence with Salmonella typhi.</title>
        <authorList>
            <person name="Liu W.-Q."/>
            <person name="Feng Y."/>
            <person name="Wang Y."/>
            <person name="Zou Q.-H."/>
            <person name="Chen F."/>
            <person name="Guo J.-T."/>
            <person name="Peng Y.-H."/>
            <person name="Jin Y."/>
            <person name="Li Y.-G."/>
            <person name="Hu S.-N."/>
            <person name="Johnston R.N."/>
            <person name="Liu G.-R."/>
            <person name="Liu S.-L."/>
        </authorList>
    </citation>
    <scope>NUCLEOTIDE SEQUENCE [LARGE SCALE GENOMIC DNA]</scope>
    <source>
        <strain>RKS4594</strain>
    </source>
</reference>
<sequence>MGNNVVVLGAQWGDEGKGKIVDLLTERAKYVVRYQGGHNAGHTLVINGEKTVLHLIPSGILRENVTSIIGNGVVLSPAALMKEMKELEDRGIPVRERLLLSEACPLILDYHVALDNAREKARGAKAIGTTGRGIGPAYEDKVARRGLRVGDLFDKETFAEKLKEVMEYHNFQLVNYYKAEAVDYQKVLDDTMAVADILTSMVVDVSDLLDQARQRGDFVMFEGAQGTLLDIDHGTYPYVTSSNTTAGGVATGSGLGPRYVDYVLGILKAYSTRVGAGPFPTELFDETGEFLCKQGNEYGATTGRRRRTGWLDTVAVRRAVQLNSLSGFCLTKLDVLDGLKEVKLCVAYRMPDGREVTTTPLAADDWKGVEPIYETMPGWSESTFGVKDRSGLPQAALNYIKRIEELTGVPIDIISTGPDRTETMILRDPFDA</sequence>
<comment type="function">
    <text evidence="1">Plays an important role in the de novo pathway of purine nucleotide biosynthesis. Catalyzes the first committed step in the biosynthesis of AMP from IMP.</text>
</comment>
<comment type="catalytic activity">
    <reaction evidence="1">
        <text>IMP + L-aspartate + GTP = N(6)-(1,2-dicarboxyethyl)-AMP + GDP + phosphate + 2 H(+)</text>
        <dbReference type="Rhea" id="RHEA:15753"/>
        <dbReference type="ChEBI" id="CHEBI:15378"/>
        <dbReference type="ChEBI" id="CHEBI:29991"/>
        <dbReference type="ChEBI" id="CHEBI:37565"/>
        <dbReference type="ChEBI" id="CHEBI:43474"/>
        <dbReference type="ChEBI" id="CHEBI:57567"/>
        <dbReference type="ChEBI" id="CHEBI:58053"/>
        <dbReference type="ChEBI" id="CHEBI:58189"/>
        <dbReference type="EC" id="6.3.4.4"/>
    </reaction>
</comment>
<comment type="cofactor">
    <cofactor evidence="1">
        <name>Mg(2+)</name>
        <dbReference type="ChEBI" id="CHEBI:18420"/>
    </cofactor>
    <text evidence="1">Binds 1 Mg(2+) ion per subunit.</text>
</comment>
<comment type="pathway">
    <text evidence="1">Purine metabolism; AMP biosynthesis via de novo pathway; AMP from IMP: step 1/2.</text>
</comment>
<comment type="subunit">
    <text evidence="1">Homodimer.</text>
</comment>
<comment type="subcellular location">
    <subcellularLocation>
        <location evidence="1">Cytoplasm</location>
    </subcellularLocation>
</comment>
<comment type="similarity">
    <text evidence="1">Belongs to the adenylosuccinate synthetase family.</text>
</comment>
<dbReference type="EC" id="6.3.4.4" evidence="1"/>
<dbReference type="EMBL" id="CP000857">
    <property type="protein sequence ID" value="ACN48564.1"/>
    <property type="molecule type" value="Genomic_DNA"/>
</dbReference>
<dbReference type="RefSeq" id="WP_000527931.1">
    <property type="nucleotide sequence ID" value="NC_012125.1"/>
</dbReference>
<dbReference type="SMR" id="C0Q6D4"/>
<dbReference type="KEGG" id="sei:SPC_4513"/>
<dbReference type="HOGENOM" id="CLU_029848_0_0_6"/>
<dbReference type="UniPathway" id="UPA00075">
    <property type="reaction ID" value="UER00335"/>
</dbReference>
<dbReference type="Proteomes" id="UP000001599">
    <property type="component" value="Chromosome"/>
</dbReference>
<dbReference type="GO" id="GO:0005737">
    <property type="term" value="C:cytoplasm"/>
    <property type="evidence" value="ECO:0007669"/>
    <property type="project" value="UniProtKB-SubCell"/>
</dbReference>
<dbReference type="GO" id="GO:0004019">
    <property type="term" value="F:adenylosuccinate synthase activity"/>
    <property type="evidence" value="ECO:0007669"/>
    <property type="project" value="UniProtKB-UniRule"/>
</dbReference>
<dbReference type="GO" id="GO:0005525">
    <property type="term" value="F:GTP binding"/>
    <property type="evidence" value="ECO:0007669"/>
    <property type="project" value="UniProtKB-UniRule"/>
</dbReference>
<dbReference type="GO" id="GO:0000287">
    <property type="term" value="F:magnesium ion binding"/>
    <property type="evidence" value="ECO:0007669"/>
    <property type="project" value="UniProtKB-UniRule"/>
</dbReference>
<dbReference type="GO" id="GO:0044208">
    <property type="term" value="P:'de novo' AMP biosynthetic process"/>
    <property type="evidence" value="ECO:0007669"/>
    <property type="project" value="UniProtKB-UniRule"/>
</dbReference>
<dbReference type="GO" id="GO:0046040">
    <property type="term" value="P:IMP metabolic process"/>
    <property type="evidence" value="ECO:0007669"/>
    <property type="project" value="TreeGrafter"/>
</dbReference>
<dbReference type="CDD" id="cd03108">
    <property type="entry name" value="AdSS"/>
    <property type="match status" value="1"/>
</dbReference>
<dbReference type="FunFam" id="1.10.300.10:FF:000001">
    <property type="entry name" value="Adenylosuccinate synthetase"/>
    <property type="match status" value="1"/>
</dbReference>
<dbReference type="FunFam" id="3.90.170.10:FF:000001">
    <property type="entry name" value="Adenylosuccinate synthetase"/>
    <property type="match status" value="1"/>
</dbReference>
<dbReference type="Gene3D" id="3.40.440.10">
    <property type="entry name" value="Adenylosuccinate Synthetase, subunit A, domain 1"/>
    <property type="match status" value="1"/>
</dbReference>
<dbReference type="Gene3D" id="1.10.300.10">
    <property type="entry name" value="Adenylosuccinate Synthetase, subunit A, domain 2"/>
    <property type="match status" value="1"/>
</dbReference>
<dbReference type="Gene3D" id="3.90.170.10">
    <property type="entry name" value="Adenylosuccinate Synthetase, subunit A, domain 3"/>
    <property type="match status" value="1"/>
</dbReference>
<dbReference type="HAMAP" id="MF_00011">
    <property type="entry name" value="Adenylosucc_synth"/>
    <property type="match status" value="1"/>
</dbReference>
<dbReference type="InterPro" id="IPR018220">
    <property type="entry name" value="Adenylosuccin_syn_GTP-bd"/>
</dbReference>
<dbReference type="InterPro" id="IPR033128">
    <property type="entry name" value="Adenylosuccin_syn_Lys_AS"/>
</dbReference>
<dbReference type="InterPro" id="IPR042109">
    <property type="entry name" value="Adenylosuccinate_synth_dom1"/>
</dbReference>
<dbReference type="InterPro" id="IPR042110">
    <property type="entry name" value="Adenylosuccinate_synth_dom2"/>
</dbReference>
<dbReference type="InterPro" id="IPR042111">
    <property type="entry name" value="Adenylosuccinate_synth_dom3"/>
</dbReference>
<dbReference type="InterPro" id="IPR001114">
    <property type="entry name" value="Adenylosuccinate_synthetase"/>
</dbReference>
<dbReference type="InterPro" id="IPR027417">
    <property type="entry name" value="P-loop_NTPase"/>
</dbReference>
<dbReference type="NCBIfam" id="NF002223">
    <property type="entry name" value="PRK01117.1"/>
    <property type="match status" value="1"/>
</dbReference>
<dbReference type="NCBIfam" id="TIGR00184">
    <property type="entry name" value="purA"/>
    <property type="match status" value="1"/>
</dbReference>
<dbReference type="PANTHER" id="PTHR11846">
    <property type="entry name" value="ADENYLOSUCCINATE SYNTHETASE"/>
    <property type="match status" value="1"/>
</dbReference>
<dbReference type="PANTHER" id="PTHR11846:SF0">
    <property type="entry name" value="ADENYLOSUCCINATE SYNTHETASE"/>
    <property type="match status" value="1"/>
</dbReference>
<dbReference type="Pfam" id="PF00709">
    <property type="entry name" value="Adenylsucc_synt"/>
    <property type="match status" value="1"/>
</dbReference>
<dbReference type="SMART" id="SM00788">
    <property type="entry name" value="Adenylsucc_synt"/>
    <property type="match status" value="1"/>
</dbReference>
<dbReference type="SUPFAM" id="SSF52540">
    <property type="entry name" value="P-loop containing nucleoside triphosphate hydrolases"/>
    <property type="match status" value="1"/>
</dbReference>
<dbReference type="PROSITE" id="PS01266">
    <property type="entry name" value="ADENYLOSUCCIN_SYN_1"/>
    <property type="match status" value="1"/>
</dbReference>
<dbReference type="PROSITE" id="PS00513">
    <property type="entry name" value="ADENYLOSUCCIN_SYN_2"/>
    <property type="match status" value="1"/>
</dbReference>
<feature type="chain" id="PRO_1000194774" description="Adenylosuccinate synthetase">
    <location>
        <begin position="1"/>
        <end position="432"/>
    </location>
</feature>
<feature type="active site" description="Proton acceptor" evidence="1">
    <location>
        <position position="14"/>
    </location>
</feature>
<feature type="active site" description="Proton donor" evidence="1">
    <location>
        <position position="42"/>
    </location>
</feature>
<feature type="binding site" evidence="1">
    <location>
        <begin position="13"/>
        <end position="19"/>
    </location>
    <ligand>
        <name>GTP</name>
        <dbReference type="ChEBI" id="CHEBI:37565"/>
    </ligand>
</feature>
<feature type="binding site" description="in other chain" evidence="1">
    <location>
        <begin position="14"/>
        <end position="17"/>
    </location>
    <ligand>
        <name>IMP</name>
        <dbReference type="ChEBI" id="CHEBI:58053"/>
        <note>ligand shared between dimeric partners</note>
    </ligand>
</feature>
<feature type="binding site" evidence="1">
    <location>
        <position position="14"/>
    </location>
    <ligand>
        <name>Mg(2+)</name>
        <dbReference type="ChEBI" id="CHEBI:18420"/>
    </ligand>
</feature>
<feature type="binding site" description="in other chain" evidence="1">
    <location>
        <begin position="39"/>
        <end position="42"/>
    </location>
    <ligand>
        <name>IMP</name>
        <dbReference type="ChEBI" id="CHEBI:58053"/>
        <note>ligand shared between dimeric partners</note>
    </ligand>
</feature>
<feature type="binding site" evidence="1">
    <location>
        <begin position="41"/>
        <end position="43"/>
    </location>
    <ligand>
        <name>GTP</name>
        <dbReference type="ChEBI" id="CHEBI:37565"/>
    </ligand>
</feature>
<feature type="binding site" evidence="1">
    <location>
        <position position="41"/>
    </location>
    <ligand>
        <name>Mg(2+)</name>
        <dbReference type="ChEBI" id="CHEBI:18420"/>
    </ligand>
</feature>
<feature type="binding site" description="in other chain" evidence="1">
    <location>
        <position position="130"/>
    </location>
    <ligand>
        <name>IMP</name>
        <dbReference type="ChEBI" id="CHEBI:58053"/>
        <note>ligand shared between dimeric partners</note>
    </ligand>
</feature>
<feature type="binding site" evidence="1">
    <location>
        <position position="144"/>
    </location>
    <ligand>
        <name>IMP</name>
        <dbReference type="ChEBI" id="CHEBI:58053"/>
        <note>ligand shared between dimeric partners</note>
    </ligand>
</feature>
<feature type="binding site" description="in other chain" evidence="1">
    <location>
        <position position="225"/>
    </location>
    <ligand>
        <name>IMP</name>
        <dbReference type="ChEBI" id="CHEBI:58053"/>
        <note>ligand shared between dimeric partners</note>
    </ligand>
</feature>
<feature type="binding site" description="in other chain" evidence="1">
    <location>
        <position position="240"/>
    </location>
    <ligand>
        <name>IMP</name>
        <dbReference type="ChEBI" id="CHEBI:58053"/>
        <note>ligand shared between dimeric partners</note>
    </ligand>
</feature>
<feature type="binding site" evidence="1">
    <location>
        <begin position="300"/>
        <end position="306"/>
    </location>
    <ligand>
        <name>substrate</name>
    </ligand>
</feature>
<feature type="binding site" description="in other chain" evidence="1">
    <location>
        <position position="304"/>
    </location>
    <ligand>
        <name>IMP</name>
        <dbReference type="ChEBI" id="CHEBI:58053"/>
        <note>ligand shared between dimeric partners</note>
    </ligand>
</feature>
<feature type="binding site" evidence="1">
    <location>
        <position position="306"/>
    </location>
    <ligand>
        <name>GTP</name>
        <dbReference type="ChEBI" id="CHEBI:37565"/>
    </ligand>
</feature>
<feature type="binding site" evidence="1">
    <location>
        <begin position="332"/>
        <end position="334"/>
    </location>
    <ligand>
        <name>GTP</name>
        <dbReference type="ChEBI" id="CHEBI:37565"/>
    </ligand>
</feature>
<feature type="binding site" evidence="1">
    <location>
        <begin position="415"/>
        <end position="417"/>
    </location>
    <ligand>
        <name>GTP</name>
        <dbReference type="ChEBI" id="CHEBI:37565"/>
    </ligand>
</feature>
<accession>C0Q6D4</accession>
<name>PURA_SALPC</name>
<proteinExistence type="inferred from homology"/>
<gene>
    <name evidence="1" type="primary">purA</name>
    <name type="ordered locus">SPC_4513</name>
</gene>